<reference key="1">
    <citation type="submission" date="2007-08" db="EMBL/GenBank/DDBJ databases">
        <authorList>
            <consortium name="The Citrobacter koseri Genome Sequencing Project"/>
            <person name="McClelland M."/>
            <person name="Sanderson E.K."/>
            <person name="Porwollik S."/>
            <person name="Spieth J."/>
            <person name="Clifton W.S."/>
            <person name="Latreille P."/>
            <person name="Courtney L."/>
            <person name="Wang C."/>
            <person name="Pepin K."/>
            <person name="Bhonagiri V."/>
            <person name="Nash W."/>
            <person name="Johnson M."/>
            <person name="Thiruvilangam P."/>
            <person name="Wilson R."/>
        </authorList>
    </citation>
    <scope>NUCLEOTIDE SEQUENCE [LARGE SCALE GENOMIC DNA]</scope>
    <source>
        <strain>ATCC BAA-895 / CDC 4225-83 / SGSC4696</strain>
    </source>
</reference>
<dbReference type="EC" id="2.3.1.109" evidence="1"/>
<dbReference type="EMBL" id="CP000822">
    <property type="protein sequence ID" value="ABV12902.1"/>
    <property type="molecule type" value="Genomic_DNA"/>
</dbReference>
<dbReference type="RefSeq" id="WP_012132639.1">
    <property type="nucleotide sequence ID" value="NC_009792.1"/>
</dbReference>
<dbReference type="SMR" id="A8AHD9"/>
<dbReference type="STRING" id="290338.CKO_01773"/>
<dbReference type="GeneID" id="45135795"/>
<dbReference type="KEGG" id="cko:CKO_01773"/>
<dbReference type="HOGENOM" id="CLU_057655_0_0_6"/>
<dbReference type="OrthoDB" id="21121at2"/>
<dbReference type="UniPathway" id="UPA00185">
    <property type="reaction ID" value="UER00279"/>
</dbReference>
<dbReference type="Proteomes" id="UP000008148">
    <property type="component" value="Chromosome"/>
</dbReference>
<dbReference type="GO" id="GO:0008791">
    <property type="term" value="F:arginine N-succinyltransferase activity"/>
    <property type="evidence" value="ECO:0007669"/>
    <property type="project" value="UniProtKB-UniRule"/>
</dbReference>
<dbReference type="GO" id="GO:0019544">
    <property type="term" value="P:arginine catabolic process to glutamate"/>
    <property type="evidence" value="ECO:0007669"/>
    <property type="project" value="UniProtKB-UniRule"/>
</dbReference>
<dbReference type="GO" id="GO:0019545">
    <property type="term" value="P:arginine catabolic process to succinate"/>
    <property type="evidence" value="ECO:0007669"/>
    <property type="project" value="UniProtKB-UniRule"/>
</dbReference>
<dbReference type="Gene3D" id="2.40.40.20">
    <property type="match status" value="1"/>
</dbReference>
<dbReference type="Gene3D" id="3.40.630.30">
    <property type="match status" value="1"/>
</dbReference>
<dbReference type="HAMAP" id="MF_01171">
    <property type="entry name" value="AstA"/>
    <property type="match status" value="1"/>
</dbReference>
<dbReference type="InterPro" id="IPR016181">
    <property type="entry name" value="Acyl_CoA_acyltransferase"/>
</dbReference>
<dbReference type="InterPro" id="IPR007041">
    <property type="entry name" value="Arg_succinylTrfase_AstA/AruG"/>
</dbReference>
<dbReference type="InterPro" id="IPR017650">
    <property type="entry name" value="Arginine_N-succinylTrfase"/>
</dbReference>
<dbReference type="NCBIfam" id="TIGR03243">
    <property type="entry name" value="arg_catab_AOST"/>
    <property type="match status" value="1"/>
</dbReference>
<dbReference type="NCBIfam" id="TIGR03244">
    <property type="entry name" value="arg_catab_AstA"/>
    <property type="match status" value="1"/>
</dbReference>
<dbReference type="NCBIfam" id="NF007770">
    <property type="entry name" value="PRK10456.1"/>
    <property type="match status" value="1"/>
</dbReference>
<dbReference type="PANTHER" id="PTHR30420:SF1">
    <property type="entry name" value="ARGININE N-SUCCINYLTRANSFERASE"/>
    <property type="match status" value="1"/>
</dbReference>
<dbReference type="PANTHER" id="PTHR30420">
    <property type="entry name" value="N-SUCCINYLARGININE DIHYDROLASE"/>
    <property type="match status" value="1"/>
</dbReference>
<dbReference type="Pfam" id="PF04958">
    <property type="entry name" value="AstA"/>
    <property type="match status" value="1"/>
</dbReference>
<dbReference type="SUPFAM" id="SSF55729">
    <property type="entry name" value="Acyl-CoA N-acyltransferases (Nat)"/>
    <property type="match status" value="1"/>
</dbReference>
<protein>
    <recommendedName>
        <fullName evidence="1">Arginine N-succinyltransferase</fullName>
        <shortName evidence="1">AST</shortName>
        <ecNumber evidence="1">2.3.1.109</ecNumber>
    </recommendedName>
    <alternativeName>
        <fullName evidence="1">AOST</fullName>
    </alternativeName>
</protein>
<accession>A8AHD9</accession>
<name>ASTA_CITK8</name>
<gene>
    <name evidence="1" type="primary">astA</name>
    <name type="ordered locus">CKO_01773</name>
</gene>
<keyword id="KW-0012">Acyltransferase</keyword>
<keyword id="KW-0056">Arginine metabolism</keyword>
<keyword id="KW-1185">Reference proteome</keyword>
<keyword id="KW-0808">Transferase</keyword>
<organism>
    <name type="scientific">Citrobacter koseri (strain ATCC BAA-895 / CDC 4225-83 / SGSC4696)</name>
    <dbReference type="NCBI Taxonomy" id="290338"/>
    <lineage>
        <taxon>Bacteria</taxon>
        <taxon>Pseudomonadati</taxon>
        <taxon>Pseudomonadota</taxon>
        <taxon>Gammaproteobacteria</taxon>
        <taxon>Enterobacterales</taxon>
        <taxon>Enterobacteriaceae</taxon>
        <taxon>Citrobacter</taxon>
    </lineage>
</organism>
<comment type="function">
    <text evidence="1">Catalyzes the transfer of succinyl-CoA to arginine to produce N(2)-succinylarginine.</text>
</comment>
<comment type="catalytic activity">
    <reaction evidence="1">
        <text>succinyl-CoA + L-arginine = N(2)-succinyl-L-arginine + CoA + H(+)</text>
        <dbReference type="Rhea" id="RHEA:15185"/>
        <dbReference type="ChEBI" id="CHEBI:15378"/>
        <dbReference type="ChEBI" id="CHEBI:32682"/>
        <dbReference type="ChEBI" id="CHEBI:57287"/>
        <dbReference type="ChEBI" id="CHEBI:57292"/>
        <dbReference type="ChEBI" id="CHEBI:58241"/>
        <dbReference type="EC" id="2.3.1.109"/>
    </reaction>
</comment>
<comment type="pathway">
    <text evidence="1">Amino-acid degradation; L-arginine degradation via AST pathway; L-glutamate and succinate from L-arginine: step 1/5.</text>
</comment>
<comment type="similarity">
    <text evidence="1">Belongs to the arginine N-succinyltransferase family.</text>
</comment>
<feature type="chain" id="PRO_1000065705" description="Arginine N-succinyltransferase">
    <location>
        <begin position="1"/>
        <end position="344"/>
    </location>
</feature>
<feature type="active site" description="Proton donor" evidence="1">
    <location>
        <position position="229"/>
    </location>
</feature>
<feature type="binding site" evidence="1">
    <location>
        <position position="125"/>
    </location>
    <ligand>
        <name>succinyl-CoA</name>
        <dbReference type="ChEBI" id="CHEBI:57292"/>
    </ligand>
</feature>
<sequence>MMVIRPVERRDVSALMQLASKTGGGLTSLPADEATLTSRIERALKTWRGELPKSEQGYVFVLEDSDTGSVAGICAIEVAVGLNDPWYNYRVGTLVHASKELNVYNALPTLFLSNDHTGSSELCTLFLDPDWRKEGNGYLLSKSRFMFMAAFRDKFNEKVVAEMRGVIDEHGYSPFWESLGERFFSMEFSRADYLCGTGQKAFIAELMPKHPIYTHFLSEEAQAVIGEVHPQTAPARTVLEKEGFRYRNYIDIFDGGPTLECDIDRVRAIRKSRLLDVVEGQPAPGEFPACLVANENYHHFRAMLIRTDPDTQRLVLTAAQLDALKCHAGDRVRLVRLCAEEKTA</sequence>
<evidence type="ECO:0000255" key="1">
    <source>
        <dbReference type="HAMAP-Rule" id="MF_01171"/>
    </source>
</evidence>
<proteinExistence type="inferred from homology"/>